<keyword id="KW-0456">Lyase</keyword>
<keyword id="KW-0460">Magnesium</keyword>
<keyword id="KW-0479">Metal-binding</keyword>
<keyword id="KW-1185">Reference proteome</keyword>
<proteinExistence type="evidence at protein level"/>
<reference key="1">
    <citation type="journal article" date="2015" name="Mol. Plant Microbe Interact.">
        <title>Genome, transcriptome, and functional analyses of Penicillium expansum provide new insights into secondary metabolism and pathogenicity.</title>
        <authorList>
            <person name="Ballester A.R."/>
            <person name="Marcet-Houben M."/>
            <person name="Levin E."/>
            <person name="Sela N."/>
            <person name="Selma-Lazaro C."/>
            <person name="Carmona L."/>
            <person name="Wisniewski M."/>
            <person name="Droby S."/>
            <person name="Gonzalez-Candelas L."/>
            <person name="Gabaldon T."/>
        </authorList>
    </citation>
    <scope>NUCLEOTIDE SEQUENCE [LARGE SCALE GENOMIC DNA]</scope>
    <source>
        <strain>MD-8</strain>
    </source>
</reference>
<reference key="2">
    <citation type="journal article" date="2022" name="J. Agric. Food Chem.">
        <title>Facile production of (+)-aristolochene and (+)-bicyclogermacrene in Escherichia coli using newly discovered sesquiterpene synthases from Penicillium expansum.</title>
        <authorList>
            <person name="Huang Z.Y."/>
            <person name="Wu Q.Y."/>
            <person name="Li C.X."/>
            <person name="Yu H.L."/>
            <person name="Xu J.H."/>
        </authorList>
    </citation>
    <scope>FUNCTION</scope>
    <scope>CATALYTIC ACTIVITY</scope>
    <scope>MUTAGENESIS OF GLU-137; GLU-140; ILE-240; HIS-284; PHE-286; GLY-288 AND ASP-292</scope>
</reference>
<name>TS4_PENEN</name>
<evidence type="ECO:0000269" key="1">
    <source>
    </source>
</evidence>
<evidence type="ECO:0000303" key="2">
    <source>
    </source>
</evidence>
<evidence type="ECO:0000305" key="3"/>
<evidence type="ECO:0000305" key="4">
    <source>
    </source>
</evidence>
<organism>
    <name type="scientific">Penicillium expansum</name>
    <name type="common">Blue mold rot fungus</name>
    <dbReference type="NCBI Taxonomy" id="27334"/>
    <lineage>
        <taxon>Eukaryota</taxon>
        <taxon>Fungi</taxon>
        <taxon>Dikarya</taxon>
        <taxon>Ascomycota</taxon>
        <taxon>Pezizomycotina</taxon>
        <taxon>Eurotiomycetes</taxon>
        <taxon>Eurotiomycetidae</taxon>
        <taxon>Eurotiales</taxon>
        <taxon>Aspergillaceae</taxon>
        <taxon>Penicillium</taxon>
    </lineage>
</organism>
<gene>
    <name evidence="2" type="primary">TS4</name>
    <name type="ORF">PEX2_001660</name>
</gene>
<protein>
    <recommendedName>
        <fullName evidence="2">(+)-bicyclogermacrene synthase TS4</fullName>
        <ecNumber evidence="1">4.2.3.100</ecNumber>
    </recommendedName>
    <alternativeName>
        <fullName evidence="2">Sesquiterpene synthase TS4</fullName>
    </alternativeName>
</protein>
<feature type="chain" id="PRO_0000456587" description="(+)-bicyclogermacrene synthase TS4">
    <location>
        <begin position="1"/>
        <end position="389"/>
    </location>
</feature>
<feature type="short sequence motif" description="DDxx(x)D/E motif" evidence="4">
    <location>
        <begin position="136"/>
        <end position="140"/>
    </location>
</feature>
<feature type="short sequence motif" description="NDxxSxxxD/E motif" evidence="4">
    <location>
        <begin position="284"/>
        <end position="292"/>
    </location>
</feature>
<feature type="binding site" evidence="4">
    <location>
        <position position="136"/>
    </location>
    <ligand>
        <name>Mg(2+)</name>
        <dbReference type="ChEBI" id="CHEBI:18420"/>
        <label>1</label>
    </ligand>
</feature>
<feature type="binding site" evidence="4">
    <location>
        <position position="136"/>
    </location>
    <ligand>
        <name>Mg(2+)</name>
        <dbReference type="ChEBI" id="CHEBI:18420"/>
        <label>2</label>
    </ligand>
</feature>
<feature type="binding site" evidence="4">
    <location>
        <position position="140"/>
    </location>
    <ligand>
        <name>Mg(2+)</name>
        <dbReference type="ChEBI" id="CHEBI:18420"/>
        <label>1</label>
    </ligand>
</feature>
<feature type="binding site" evidence="4">
    <location>
        <position position="140"/>
    </location>
    <ligand>
        <name>Mg(2+)</name>
        <dbReference type="ChEBI" id="CHEBI:18420"/>
        <label>2</label>
    </ligand>
</feature>
<feature type="binding site" evidence="4">
    <location>
        <position position="284"/>
    </location>
    <ligand>
        <name>Mg(2+)</name>
        <dbReference type="ChEBI" id="CHEBI:18420"/>
        <label>3</label>
    </ligand>
</feature>
<feature type="binding site" evidence="4">
    <location>
        <position position="288"/>
    </location>
    <ligand>
        <name>Mg(2+)</name>
        <dbReference type="ChEBI" id="CHEBI:18420"/>
        <label>3</label>
    </ligand>
</feature>
<feature type="binding site" evidence="4">
    <location>
        <position position="292"/>
    </location>
    <ligand>
        <name>Mg(2+)</name>
        <dbReference type="ChEBI" id="CHEBI:18420"/>
        <label>3</label>
    </ligand>
</feature>
<feature type="mutagenesis site" description="Does not affect the sesquiterpene synthase activity." evidence="1">
    <original>E</original>
    <variation>D</variation>
    <location>
        <position position="137"/>
    </location>
</feature>
<feature type="mutagenesis site" description="Impairs the sesquiterpene synthse activity." evidence="1">
    <original>E</original>
    <variation>D</variation>
    <location>
        <position position="140"/>
    </location>
</feature>
<feature type="mutagenesis site" description="Strongly reduces the sesquiterpene synthase activity." evidence="1">
    <original>I</original>
    <variation>Y</variation>
    <location>
        <position position="240"/>
    </location>
</feature>
<feature type="mutagenesis site" description="Reduces the sesquiterpene synthase activity." evidence="1">
    <original>H</original>
    <variation>N</variation>
    <location>
        <position position="284"/>
    </location>
</feature>
<feature type="mutagenesis site" description="Reduces the sesquiterpene synthase activity." evidence="1">
    <original>F</original>
    <variation>I</variation>
    <variation>L</variation>
    <variation>V</variation>
    <location>
        <position position="286"/>
    </location>
</feature>
<feature type="mutagenesis site" description="Reduces the sesquiterpene synthase activity." evidence="1">
    <original>G</original>
    <variation>S</variation>
    <location>
        <position position="288"/>
    </location>
</feature>
<feature type="mutagenesis site" description="Strongly reduces the sesquiterpene synthase activity." evidence="1">
    <original>D</original>
    <variation>E</variation>
    <location>
        <position position="292"/>
    </location>
</feature>
<dbReference type="EC" id="4.2.3.100" evidence="1"/>
<dbReference type="EMBL" id="JQFZ01000152">
    <property type="protein sequence ID" value="KGO57192.1"/>
    <property type="molecule type" value="Genomic_DNA"/>
</dbReference>
<dbReference type="RefSeq" id="XP_016598880.1">
    <property type="nucleotide sequence ID" value="XM_016737444.1"/>
</dbReference>
<dbReference type="STRING" id="27334.A0A0A2JP58"/>
<dbReference type="GeneID" id="27672863"/>
<dbReference type="VEuPathDB" id="FungiDB:PEXP_074230"/>
<dbReference type="HOGENOM" id="CLU_748001_0_0_1"/>
<dbReference type="Proteomes" id="UP000030143">
    <property type="component" value="Unassembled WGS sequence"/>
</dbReference>
<dbReference type="GO" id="GO:0016829">
    <property type="term" value="F:lyase activity"/>
    <property type="evidence" value="ECO:0007669"/>
    <property type="project" value="UniProtKB-KW"/>
</dbReference>
<dbReference type="GO" id="GO:0046872">
    <property type="term" value="F:metal ion binding"/>
    <property type="evidence" value="ECO:0007669"/>
    <property type="project" value="UniProtKB-KW"/>
</dbReference>
<dbReference type="Gene3D" id="1.10.600.10">
    <property type="entry name" value="Farnesyl Diphosphate Synthase"/>
    <property type="match status" value="1"/>
</dbReference>
<dbReference type="InterPro" id="IPR008949">
    <property type="entry name" value="Isoprenoid_synthase_dom_sf"/>
</dbReference>
<dbReference type="Pfam" id="PF19086">
    <property type="entry name" value="Terpene_syn_C_2"/>
    <property type="match status" value="1"/>
</dbReference>
<dbReference type="SUPFAM" id="SSF48576">
    <property type="entry name" value="Terpenoid synthases"/>
    <property type="match status" value="1"/>
</dbReference>
<sequence length="389" mass="44843">MAQQMSPGQHGSECIHDNAQSHLPPYVDCDSAGFRNNRSNLTLKFSSDFEKAQKAMEFCSDVCAVYFPADLDVVFNSEIENELAVDICEWRFFPCFSESLKRLAISMSRLSSLQIDLSYERRTLLHHHLVWIFLMDEVCERLPLLGLHDTMERKYLENLKNITMDLPIEDLNQYKGICPDDLLQVALDVQRILAEDLMPLKRALLEESHVQKCSETLCLFFDNQYEEGKIFFKRPTTHQIMSTRGYTIGTNMVFLLFLQTPMVDLYNADDPGLVQLSILVALFHDFIGLQKDLDSLKQDCDGSVGLNLVRVSMQESGHDEKEALQTVVRRLNSYCHGLEFFMSAYTPLCKQLYQEILKFVFALYDYHLLGATESSNSRYGWHRVSDYKA</sequence>
<comment type="function">
    <text evidence="1">Catalyzes the cyclization of trans,trans-farnesyl diphosphate (FPP) to the bicyclic sesquiterpene bicyclogermacrene.</text>
</comment>
<comment type="catalytic activity">
    <reaction evidence="1">
        <text>(2E,6E)-farnesyl diphosphate = bicyclogermacrene + diphosphate</text>
        <dbReference type="Rhea" id="RHEA:31999"/>
        <dbReference type="ChEBI" id="CHEBI:33019"/>
        <dbReference type="ChEBI" id="CHEBI:63709"/>
        <dbReference type="ChEBI" id="CHEBI:175763"/>
        <dbReference type="EC" id="4.2.3.100"/>
    </reaction>
    <physiologicalReaction direction="left-to-right" evidence="1">
        <dbReference type="Rhea" id="RHEA:32000"/>
    </physiologicalReaction>
</comment>
<comment type="domain">
    <text evidence="4">Contains several highly conserved motifs that are important for catalytic activity including the aspartate-rich 'DDxx(x)D/E' motif and the 'NDxxSxxxD/E' motif, both of which are involved in complexing Mg(2+) ions to coordinate the binding of the isoprenyl diphosphate substrate in the active site.</text>
</comment>
<comment type="similarity">
    <text evidence="3">Belongs to the terpene synthase family.</text>
</comment>
<accession>A0A0A2JP58</accession>